<protein>
    <recommendedName>
        <fullName evidence="2">Translation initiation factor IF-2</fullName>
    </recommendedName>
</protein>
<organism>
    <name type="scientific">Stutzerimonas stutzeri (strain A1501)</name>
    <name type="common">Pseudomonas stutzeri</name>
    <dbReference type="NCBI Taxonomy" id="379731"/>
    <lineage>
        <taxon>Bacteria</taxon>
        <taxon>Pseudomonadati</taxon>
        <taxon>Pseudomonadota</taxon>
        <taxon>Gammaproteobacteria</taxon>
        <taxon>Pseudomonadales</taxon>
        <taxon>Pseudomonadaceae</taxon>
        <taxon>Stutzerimonas</taxon>
    </lineage>
</organism>
<accession>A4VPP0</accession>
<dbReference type="EMBL" id="CP000304">
    <property type="protein sequence ID" value="ABP80941.1"/>
    <property type="molecule type" value="Genomic_DNA"/>
</dbReference>
<dbReference type="RefSeq" id="WP_011914372.1">
    <property type="nucleotide sequence ID" value="NC_009434.1"/>
</dbReference>
<dbReference type="SMR" id="A4VPP0"/>
<dbReference type="GeneID" id="66822707"/>
<dbReference type="KEGG" id="psa:PST_3310"/>
<dbReference type="eggNOG" id="COG0532">
    <property type="taxonomic scope" value="Bacteria"/>
</dbReference>
<dbReference type="HOGENOM" id="CLU_006301_6_1_6"/>
<dbReference type="Proteomes" id="UP000000233">
    <property type="component" value="Chromosome"/>
</dbReference>
<dbReference type="GO" id="GO:0005829">
    <property type="term" value="C:cytosol"/>
    <property type="evidence" value="ECO:0007669"/>
    <property type="project" value="TreeGrafter"/>
</dbReference>
<dbReference type="GO" id="GO:0005525">
    <property type="term" value="F:GTP binding"/>
    <property type="evidence" value="ECO:0007669"/>
    <property type="project" value="UniProtKB-KW"/>
</dbReference>
<dbReference type="GO" id="GO:0003924">
    <property type="term" value="F:GTPase activity"/>
    <property type="evidence" value="ECO:0007669"/>
    <property type="project" value="UniProtKB-UniRule"/>
</dbReference>
<dbReference type="GO" id="GO:0003743">
    <property type="term" value="F:translation initiation factor activity"/>
    <property type="evidence" value="ECO:0007669"/>
    <property type="project" value="UniProtKB-UniRule"/>
</dbReference>
<dbReference type="CDD" id="cd01887">
    <property type="entry name" value="IF2_eIF5B"/>
    <property type="match status" value="1"/>
</dbReference>
<dbReference type="CDD" id="cd03702">
    <property type="entry name" value="IF2_mtIF2_II"/>
    <property type="match status" value="1"/>
</dbReference>
<dbReference type="CDD" id="cd03692">
    <property type="entry name" value="mtIF2_IVc"/>
    <property type="match status" value="1"/>
</dbReference>
<dbReference type="FunFam" id="2.40.30.10:FF:000007">
    <property type="entry name" value="Translation initiation factor IF-2"/>
    <property type="match status" value="1"/>
</dbReference>
<dbReference type="FunFam" id="2.40.30.10:FF:000008">
    <property type="entry name" value="Translation initiation factor IF-2"/>
    <property type="match status" value="1"/>
</dbReference>
<dbReference type="FunFam" id="3.40.50.10050:FF:000001">
    <property type="entry name" value="Translation initiation factor IF-2"/>
    <property type="match status" value="1"/>
</dbReference>
<dbReference type="FunFam" id="3.40.50.300:FF:000019">
    <property type="entry name" value="Translation initiation factor IF-2"/>
    <property type="match status" value="1"/>
</dbReference>
<dbReference type="Gene3D" id="3.40.50.300">
    <property type="entry name" value="P-loop containing nucleotide triphosphate hydrolases"/>
    <property type="match status" value="1"/>
</dbReference>
<dbReference type="Gene3D" id="3.30.56.50">
    <property type="entry name" value="Putative DNA-binding domain, N-terminal subdomain of bacterial translation initiation factor IF2"/>
    <property type="match status" value="1"/>
</dbReference>
<dbReference type="Gene3D" id="2.40.30.10">
    <property type="entry name" value="Translation factors"/>
    <property type="match status" value="2"/>
</dbReference>
<dbReference type="Gene3D" id="3.40.50.10050">
    <property type="entry name" value="Translation initiation factor IF- 2, domain 3"/>
    <property type="match status" value="1"/>
</dbReference>
<dbReference type="HAMAP" id="MF_00100_B">
    <property type="entry name" value="IF_2_B"/>
    <property type="match status" value="1"/>
</dbReference>
<dbReference type="InterPro" id="IPR009061">
    <property type="entry name" value="DNA-bd_dom_put_sf"/>
</dbReference>
<dbReference type="InterPro" id="IPR053905">
    <property type="entry name" value="EF-G-like_DII"/>
</dbReference>
<dbReference type="InterPro" id="IPR013575">
    <property type="entry name" value="IF2_assoc_dom_bac"/>
</dbReference>
<dbReference type="InterPro" id="IPR044145">
    <property type="entry name" value="IF2_II"/>
</dbReference>
<dbReference type="InterPro" id="IPR006847">
    <property type="entry name" value="IF2_N"/>
</dbReference>
<dbReference type="InterPro" id="IPR027417">
    <property type="entry name" value="P-loop_NTPase"/>
</dbReference>
<dbReference type="InterPro" id="IPR005225">
    <property type="entry name" value="Small_GTP-bd"/>
</dbReference>
<dbReference type="InterPro" id="IPR000795">
    <property type="entry name" value="T_Tr_GTP-bd_dom"/>
</dbReference>
<dbReference type="InterPro" id="IPR000178">
    <property type="entry name" value="TF_IF2_bacterial-like"/>
</dbReference>
<dbReference type="InterPro" id="IPR015760">
    <property type="entry name" value="TIF_IF2"/>
</dbReference>
<dbReference type="InterPro" id="IPR023115">
    <property type="entry name" value="TIF_IF2_dom3"/>
</dbReference>
<dbReference type="InterPro" id="IPR036925">
    <property type="entry name" value="TIF_IF2_dom3_sf"/>
</dbReference>
<dbReference type="InterPro" id="IPR009000">
    <property type="entry name" value="Transl_B-barrel_sf"/>
</dbReference>
<dbReference type="NCBIfam" id="TIGR00487">
    <property type="entry name" value="IF-2"/>
    <property type="match status" value="1"/>
</dbReference>
<dbReference type="NCBIfam" id="TIGR00231">
    <property type="entry name" value="small_GTP"/>
    <property type="match status" value="1"/>
</dbReference>
<dbReference type="PANTHER" id="PTHR43381:SF5">
    <property type="entry name" value="TR-TYPE G DOMAIN-CONTAINING PROTEIN"/>
    <property type="match status" value="1"/>
</dbReference>
<dbReference type="PANTHER" id="PTHR43381">
    <property type="entry name" value="TRANSLATION INITIATION FACTOR IF-2-RELATED"/>
    <property type="match status" value="1"/>
</dbReference>
<dbReference type="Pfam" id="PF22042">
    <property type="entry name" value="EF-G_D2"/>
    <property type="match status" value="1"/>
</dbReference>
<dbReference type="Pfam" id="PF00009">
    <property type="entry name" value="GTP_EFTU"/>
    <property type="match status" value="1"/>
</dbReference>
<dbReference type="Pfam" id="PF11987">
    <property type="entry name" value="IF-2"/>
    <property type="match status" value="1"/>
</dbReference>
<dbReference type="Pfam" id="PF08364">
    <property type="entry name" value="IF2_assoc"/>
    <property type="match status" value="1"/>
</dbReference>
<dbReference type="Pfam" id="PF04760">
    <property type="entry name" value="IF2_N"/>
    <property type="match status" value="2"/>
</dbReference>
<dbReference type="SUPFAM" id="SSF52156">
    <property type="entry name" value="Initiation factor IF2/eIF5b, domain 3"/>
    <property type="match status" value="1"/>
</dbReference>
<dbReference type="SUPFAM" id="SSF52540">
    <property type="entry name" value="P-loop containing nucleoside triphosphate hydrolases"/>
    <property type="match status" value="1"/>
</dbReference>
<dbReference type="SUPFAM" id="SSF46955">
    <property type="entry name" value="Putative DNA-binding domain"/>
    <property type="match status" value="1"/>
</dbReference>
<dbReference type="SUPFAM" id="SSF50447">
    <property type="entry name" value="Translation proteins"/>
    <property type="match status" value="2"/>
</dbReference>
<dbReference type="PROSITE" id="PS51722">
    <property type="entry name" value="G_TR_2"/>
    <property type="match status" value="1"/>
</dbReference>
<dbReference type="PROSITE" id="PS01176">
    <property type="entry name" value="IF2"/>
    <property type="match status" value="1"/>
</dbReference>
<gene>
    <name evidence="2" type="primary">infB</name>
    <name type="ordered locus">PST_3310</name>
</gene>
<proteinExistence type="inferred from homology"/>
<comment type="function">
    <text evidence="2">One of the essential components for the initiation of protein synthesis. Protects formylmethionyl-tRNA from spontaneous hydrolysis and promotes its binding to the 30S ribosomal subunits. Also involved in the hydrolysis of GTP during the formation of the 70S ribosomal complex.</text>
</comment>
<comment type="subcellular location">
    <subcellularLocation>
        <location evidence="2">Cytoplasm</location>
    </subcellularLocation>
</comment>
<comment type="similarity">
    <text evidence="2">Belongs to the TRAFAC class translation factor GTPase superfamily. Classic translation factor GTPase family. IF-2 subfamily.</text>
</comment>
<keyword id="KW-0963">Cytoplasm</keyword>
<keyword id="KW-0342">GTP-binding</keyword>
<keyword id="KW-0396">Initiation factor</keyword>
<keyword id="KW-0547">Nucleotide-binding</keyword>
<keyword id="KW-0648">Protein biosynthesis</keyword>
<keyword id="KW-1185">Reference proteome</keyword>
<sequence length="837" mass="90460">MTQVTVKELAQVVDTPVERLLQQMREAGLSHTSAEQVVTDNEKQALLAHLKSSHGAKVDEPRKITLQRKTTTKLKVGGSKTISVEVRKKKTFVKRSAEEIEAEQRRELEEQRAAEEAARLKAEQEARERAEEEARRQAEAAKAQTAETAAPAAAESASSAEPAQVVAAVEAAAPAPERKKEEPRRVEKPRSDDDERRDRKHAQHRPSLKTKAPLARTVRSGEDEADGFRRGGRGGKSKLKKRNQHGFQSPTGPVVREVSIGETITVAELAQQMSVKAAEVIKFMFKMGSPVTINQVLDQETAQLVAEELGHKVKLVSDNALEEQLAELLKFEGESVARAPVVTVMGHVDHGKTSLLDYIRRAKVAVGEAGGITQHIGAYHVETERGMVTFLDTPGHAAFTAMRARGAKATDIVILVVAADDGVMPQTQEAVQHAKAAGVPIVVAVNKIDKPEANPDNIKNGLAALDVIPEEWGGDTPFIPVSAKVGTGVDELLEAVLLQAEILELKATPSAPGRGVVVESRLDKGRGPVATVLVQDGTLRQGDMVLCGVNFGRVRAMLDENGKPVKEAGPAIPVEILGLDGTPEAGDDLTVVADEKKAREVALFRQGKFREVKLARAHAGKLENIFETMGQDEKKTLNIVLKADVRGSLEALQGSLNGLGNDEVQVRVVGGGVGGITESDANLALASNAVLFGFNVRADAGARKIVEAEGLDMRYYNVIYDIIEDVKKALTGMLGSDVRENILGIAEVRDVFRSPKFGAIAGCMVTEGMVHRNRPIRVLRDDVVIFEGELESLRRFKDDVAEVRAGMECGIGVKSYNDVKVGDKIEVFEKVEVARSL</sequence>
<reference key="1">
    <citation type="journal article" date="2008" name="Proc. Natl. Acad. Sci. U.S.A.">
        <title>Nitrogen fixation island and rhizosphere competence traits in the genome of root-associated Pseudomonas stutzeri A1501.</title>
        <authorList>
            <person name="Yan Y."/>
            <person name="Yang J."/>
            <person name="Dou Y."/>
            <person name="Chen M."/>
            <person name="Ping S."/>
            <person name="Peng J."/>
            <person name="Lu W."/>
            <person name="Zhang W."/>
            <person name="Yao Z."/>
            <person name="Li H."/>
            <person name="Liu W."/>
            <person name="He S."/>
            <person name="Geng L."/>
            <person name="Zhang X."/>
            <person name="Yang F."/>
            <person name="Yu H."/>
            <person name="Zhan Y."/>
            <person name="Li D."/>
            <person name="Lin Z."/>
            <person name="Wang Y."/>
            <person name="Elmerich C."/>
            <person name="Lin M."/>
            <person name="Jin Q."/>
        </authorList>
    </citation>
    <scope>NUCLEOTIDE SEQUENCE [LARGE SCALE GENOMIC DNA]</scope>
    <source>
        <strain>A1501</strain>
    </source>
</reference>
<feature type="chain" id="PRO_1000008307" description="Translation initiation factor IF-2">
    <location>
        <begin position="1"/>
        <end position="837"/>
    </location>
</feature>
<feature type="domain" description="tr-type G">
    <location>
        <begin position="337"/>
        <end position="504"/>
    </location>
</feature>
<feature type="region of interest" description="Disordered" evidence="3">
    <location>
        <begin position="97"/>
        <end position="253"/>
    </location>
</feature>
<feature type="region of interest" description="G1" evidence="1">
    <location>
        <begin position="346"/>
        <end position="353"/>
    </location>
</feature>
<feature type="region of interest" description="G2" evidence="1">
    <location>
        <begin position="371"/>
        <end position="375"/>
    </location>
</feature>
<feature type="region of interest" description="G3" evidence="1">
    <location>
        <begin position="392"/>
        <end position="395"/>
    </location>
</feature>
<feature type="region of interest" description="G4" evidence="1">
    <location>
        <begin position="446"/>
        <end position="449"/>
    </location>
</feature>
<feature type="region of interest" description="G5" evidence="1">
    <location>
        <begin position="482"/>
        <end position="484"/>
    </location>
</feature>
<feature type="compositionally biased region" description="Basic and acidic residues" evidence="3">
    <location>
        <begin position="97"/>
        <end position="139"/>
    </location>
</feature>
<feature type="compositionally biased region" description="Low complexity" evidence="3">
    <location>
        <begin position="140"/>
        <end position="175"/>
    </location>
</feature>
<feature type="compositionally biased region" description="Basic and acidic residues" evidence="3">
    <location>
        <begin position="176"/>
        <end position="197"/>
    </location>
</feature>
<feature type="compositionally biased region" description="Basic residues" evidence="3">
    <location>
        <begin position="198"/>
        <end position="208"/>
    </location>
</feature>
<feature type="compositionally biased region" description="Basic and acidic residues" evidence="3">
    <location>
        <begin position="219"/>
        <end position="229"/>
    </location>
</feature>
<feature type="compositionally biased region" description="Basic residues" evidence="3">
    <location>
        <begin position="230"/>
        <end position="244"/>
    </location>
</feature>
<feature type="binding site" evidence="2">
    <location>
        <begin position="346"/>
        <end position="353"/>
    </location>
    <ligand>
        <name>GTP</name>
        <dbReference type="ChEBI" id="CHEBI:37565"/>
    </ligand>
</feature>
<feature type="binding site" evidence="2">
    <location>
        <begin position="392"/>
        <end position="396"/>
    </location>
    <ligand>
        <name>GTP</name>
        <dbReference type="ChEBI" id="CHEBI:37565"/>
    </ligand>
</feature>
<feature type="binding site" evidence="2">
    <location>
        <begin position="446"/>
        <end position="449"/>
    </location>
    <ligand>
        <name>GTP</name>
        <dbReference type="ChEBI" id="CHEBI:37565"/>
    </ligand>
</feature>
<name>IF2_STUS1</name>
<evidence type="ECO:0000250" key="1"/>
<evidence type="ECO:0000255" key="2">
    <source>
        <dbReference type="HAMAP-Rule" id="MF_00100"/>
    </source>
</evidence>
<evidence type="ECO:0000256" key="3">
    <source>
        <dbReference type="SAM" id="MobiDB-lite"/>
    </source>
</evidence>